<gene>
    <name evidence="8" type="primary">Dnali1</name>
</gene>
<feature type="chain" id="PRO_0000114677" description="Axonemal dynein light intermediate polypeptide 1">
    <location>
        <begin position="1"/>
        <end position="258"/>
    </location>
</feature>
<feature type="region of interest" description="Disordered" evidence="4">
    <location>
        <begin position="1"/>
        <end position="60"/>
    </location>
</feature>
<feature type="region of interest" description="Disordered" evidence="4">
    <location>
        <begin position="202"/>
        <end position="231"/>
    </location>
</feature>
<feature type="coiled-coil region" evidence="3">
    <location>
        <begin position="176"/>
        <end position="255"/>
    </location>
</feature>
<feature type="sequence conflict" description="In Ref. 3; AAI18620." evidence="7" ref="3">
    <original>F</original>
    <variation>FE</variation>
    <location>
        <position position="132"/>
    </location>
</feature>
<sequence>MIPPADSLLKYDTPVLVSRNTEKRSPTARPLKVTIQQPGPSSTSPQPPKAKLPSTSCVPDPTKQAEEILNAILPPREWVEDTQLWIQQVSSTPSTRMDVVHLQEQLDLKLQQRQARETGICPVRRELYSQCFDELIREVTINCAERGLLLLRVRDEIHMTIAAYQTLYESSVAFGMRKALQAEQGKSDMERKITELETEKRDLERQVNEQKAKCEATEKRESERRQVEEKKHNEEIQFLKRTNQQLKAQLEGIIAPKK</sequence>
<evidence type="ECO:0000250" key="1">
    <source>
        <dbReference type="UniProtKB" id="O14645"/>
    </source>
</evidence>
<evidence type="ECO:0000250" key="2">
    <source>
        <dbReference type="UniProtKB" id="Q6GN86"/>
    </source>
</evidence>
<evidence type="ECO:0000255" key="3"/>
<evidence type="ECO:0000256" key="4">
    <source>
        <dbReference type="SAM" id="MobiDB-lite"/>
    </source>
</evidence>
<evidence type="ECO:0000269" key="5">
    <source>
    </source>
</evidence>
<evidence type="ECO:0000269" key="6">
    <source>
    </source>
</evidence>
<evidence type="ECO:0000305" key="7"/>
<evidence type="ECO:0000312" key="8">
    <source>
        <dbReference type="MGI" id="MGI:1922813"/>
    </source>
</evidence>
<comment type="function">
    <text evidence="6">Involved in sperm flagellum assembly.</text>
</comment>
<comment type="subunit">
    <text evidence="1 5">Interacts with CFAP45 (By similarity). Interacts with DYNC1H1 (PubMed:16496424).</text>
</comment>
<comment type="subcellular location">
    <subcellularLocation>
        <location evidence="5">Cell projection</location>
        <location evidence="5">Cilium</location>
    </subcellularLocation>
    <subcellularLocation>
        <location evidence="5">Cell projection</location>
        <location evidence="5">Cilium</location>
        <location evidence="5">Flagellum</location>
    </subcellularLocation>
    <subcellularLocation>
        <location evidence="2">Dynein axonemal particle</location>
    </subcellularLocation>
    <subcellularLocation>
        <location evidence="5">Cytoplasm</location>
    </subcellularLocation>
</comment>
<comment type="tissue specificity">
    <text evidence="5">Predominantly expressed in the testis, also detected at lower levels in several tissues expressing cilia (PubMed:16496424). Strongly expressed in elongating spermatid cells (at protein level) (PubMed:16496424).</text>
</comment>
<comment type="disruption phenotype">
    <text evidence="6">CRISPR-mediated knockout results in loss of sperm motility and fibrous sheath abnormalities with asymmetrical distribution of flagellar proteins in a majority of sperm. Nearly half of the knockout mice develop enlarged heads and hydrocephaly.</text>
</comment>
<comment type="similarity">
    <text evidence="7">Belongs to the inner dynein arm light chain family.</text>
</comment>
<keyword id="KW-0966">Cell projection</keyword>
<keyword id="KW-0969">Cilium</keyword>
<keyword id="KW-0175">Coiled coil</keyword>
<keyword id="KW-0963">Cytoplasm</keyword>
<keyword id="KW-0243">Dynein</keyword>
<keyword id="KW-0282">Flagellum</keyword>
<keyword id="KW-0505">Motor protein</keyword>
<keyword id="KW-1185">Reference proteome</keyword>
<reference key="1">
    <citation type="journal article" date="2006" name="Mol. Reprod. Dev.">
        <title>The murine Dnali1 gene encodes a flagellar protein that interacts with the cytoplasmic dynein heavy chain 1.</title>
        <authorList>
            <person name="Rashid S."/>
            <person name="Breckle R."/>
            <person name="Hupe M."/>
            <person name="Geisler S."/>
            <person name="Doerwald N."/>
            <person name="Neesen J."/>
        </authorList>
    </citation>
    <scope>NUCLEOTIDE SEQUENCE [MRNA]</scope>
    <scope>SUBCELLULAR LOCATION</scope>
    <scope>TISSUE SPECIFICITY</scope>
    <scope>INTERACTION WITH DYNC1H1</scope>
</reference>
<reference key="2">
    <citation type="journal article" date="2005" name="Science">
        <title>The transcriptional landscape of the mammalian genome.</title>
        <authorList>
            <person name="Carninci P."/>
            <person name="Kasukawa T."/>
            <person name="Katayama S."/>
            <person name="Gough J."/>
            <person name="Frith M.C."/>
            <person name="Maeda N."/>
            <person name="Oyama R."/>
            <person name="Ravasi T."/>
            <person name="Lenhard B."/>
            <person name="Wells C."/>
            <person name="Kodzius R."/>
            <person name="Shimokawa K."/>
            <person name="Bajic V.B."/>
            <person name="Brenner S.E."/>
            <person name="Batalov S."/>
            <person name="Forrest A.R."/>
            <person name="Zavolan M."/>
            <person name="Davis M.J."/>
            <person name="Wilming L.G."/>
            <person name="Aidinis V."/>
            <person name="Allen J.E."/>
            <person name="Ambesi-Impiombato A."/>
            <person name="Apweiler R."/>
            <person name="Aturaliya R.N."/>
            <person name="Bailey T.L."/>
            <person name="Bansal M."/>
            <person name="Baxter L."/>
            <person name="Beisel K.W."/>
            <person name="Bersano T."/>
            <person name="Bono H."/>
            <person name="Chalk A.M."/>
            <person name="Chiu K.P."/>
            <person name="Choudhary V."/>
            <person name="Christoffels A."/>
            <person name="Clutterbuck D.R."/>
            <person name="Crowe M.L."/>
            <person name="Dalla E."/>
            <person name="Dalrymple B.P."/>
            <person name="de Bono B."/>
            <person name="Della Gatta G."/>
            <person name="di Bernardo D."/>
            <person name="Down T."/>
            <person name="Engstrom P."/>
            <person name="Fagiolini M."/>
            <person name="Faulkner G."/>
            <person name="Fletcher C.F."/>
            <person name="Fukushima T."/>
            <person name="Furuno M."/>
            <person name="Futaki S."/>
            <person name="Gariboldi M."/>
            <person name="Georgii-Hemming P."/>
            <person name="Gingeras T.R."/>
            <person name="Gojobori T."/>
            <person name="Green R.E."/>
            <person name="Gustincich S."/>
            <person name="Harbers M."/>
            <person name="Hayashi Y."/>
            <person name="Hensch T.K."/>
            <person name="Hirokawa N."/>
            <person name="Hill D."/>
            <person name="Huminiecki L."/>
            <person name="Iacono M."/>
            <person name="Ikeo K."/>
            <person name="Iwama A."/>
            <person name="Ishikawa T."/>
            <person name="Jakt M."/>
            <person name="Kanapin A."/>
            <person name="Katoh M."/>
            <person name="Kawasawa Y."/>
            <person name="Kelso J."/>
            <person name="Kitamura H."/>
            <person name="Kitano H."/>
            <person name="Kollias G."/>
            <person name="Krishnan S.P."/>
            <person name="Kruger A."/>
            <person name="Kummerfeld S.K."/>
            <person name="Kurochkin I.V."/>
            <person name="Lareau L.F."/>
            <person name="Lazarevic D."/>
            <person name="Lipovich L."/>
            <person name="Liu J."/>
            <person name="Liuni S."/>
            <person name="McWilliam S."/>
            <person name="Madan Babu M."/>
            <person name="Madera M."/>
            <person name="Marchionni L."/>
            <person name="Matsuda H."/>
            <person name="Matsuzawa S."/>
            <person name="Miki H."/>
            <person name="Mignone F."/>
            <person name="Miyake S."/>
            <person name="Morris K."/>
            <person name="Mottagui-Tabar S."/>
            <person name="Mulder N."/>
            <person name="Nakano N."/>
            <person name="Nakauchi H."/>
            <person name="Ng P."/>
            <person name="Nilsson R."/>
            <person name="Nishiguchi S."/>
            <person name="Nishikawa S."/>
            <person name="Nori F."/>
            <person name="Ohara O."/>
            <person name="Okazaki Y."/>
            <person name="Orlando V."/>
            <person name="Pang K.C."/>
            <person name="Pavan W.J."/>
            <person name="Pavesi G."/>
            <person name="Pesole G."/>
            <person name="Petrovsky N."/>
            <person name="Piazza S."/>
            <person name="Reed J."/>
            <person name="Reid J.F."/>
            <person name="Ring B.Z."/>
            <person name="Ringwald M."/>
            <person name="Rost B."/>
            <person name="Ruan Y."/>
            <person name="Salzberg S.L."/>
            <person name="Sandelin A."/>
            <person name="Schneider C."/>
            <person name="Schoenbach C."/>
            <person name="Sekiguchi K."/>
            <person name="Semple C.A."/>
            <person name="Seno S."/>
            <person name="Sessa L."/>
            <person name="Sheng Y."/>
            <person name="Shibata Y."/>
            <person name="Shimada H."/>
            <person name="Shimada K."/>
            <person name="Silva D."/>
            <person name="Sinclair B."/>
            <person name="Sperling S."/>
            <person name="Stupka E."/>
            <person name="Sugiura K."/>
            <person name="Sultana R."/>
            <person name="Takenaka Y."/>
            <person name="Taki K."/>
            <person name="Tammoja K."/>
            <person name="Tan S.L."/>
            <person name="Tang S."/>
            <person name="Taylor M.S."/>
            <person name="Tegner J."/>
            <person name="Teichmann S.A."/>
            <person name="Ueda H.R."/>
            <person name="van Nimwegen E."/>
            <person name="Verardo R."/>
            <person name="Wei C.L."/>
            <person name="Yagi K."/>
            <person name="Yamanishi H."/>
            <person name="Zabarovsky E."/>
            <person name="Zhu S."/>
            <person name="Zimmer A."/>
            <person name="Hide W."/>
            <person name="Bult C."/>
            <person name="Grimmond S.M."/>
            <person name="Teasdale R.D."/>
            <person name="Liu E.T."/>
            <person name="Brusic V."/>
            <person name="Quackenbush J."/>
            <person name="Wahlestedt C."/>
            <person name="Mattick J.S."/>
            <person name="Hume D.A."/>
            <person name="Kai C."/>
            <person name="Sasaki D."/>
            <person name="Tomaru Y."/>
            <person name="Fukuda S."/>
            <person name="Kanamori-Katayama M."/>
            <person name="Suzuki M."/>
            <person name="Aoki J."/>
            <person name="Arakawa T."/>
            <person name="Iida J."/>
            <person name="Imamura K."/>
            <person name="Itoh M."/>
            <person name="Kato T."/>
            <person name="Kawaji H."/>
            <person name="Kawagashira N."/>
            <person name="Kawashima T."/>
            <person name="Kojima M."/>
            <person name="Kondo S."/>
            <person name="Konno H."/>
            <person name="Nakano K."/>
            <person name="Ninomiya N."/>
            <person name="Nishio T."/>
            <person name="Okada M."/>
            <person name="Plessy C."/>
            <person name="Shibata K."/>
            <person name="Shiraki T."/>
            <person name="Suzuki S."/>
            <person name="Tagami M."/>
            <person name="Waki K."/>
            <person name="Watahiki A."/>
            <person name="Okamura-Oho Y."/>
            <person name="Suzuki H."/>
            <person name="Kawai J."/>
            <person name="Hayashizaki Y."/>
        </authorList>
    </citation>
    <scope>NUCLEOTIDE SEQUENCE [LARGE SCALE MRNA]</scope>
    <source>
        <strain>C57BL/6J</strain>
        <tissue>Testis</tissue>
    </source>
</reference>
<reference key="3">
    <citation type="journal article" date="2004" name="Genome Res.">
        <title>The status, quality, and expansion of the NIH full-length cDNA project: the Mammalian Gene Collection (MGC).</title>
        <authorList>
            <consortium name="The MGC Project Team"/>
        </authorList>
    </citation>
    <scope>NUCLEOTIDE SEQUENCE [LARGE SCALE MRNA]</scope>
</reference>
<reference key="4">
    <citation type="journal article" date="2010" name="Cell">
        <title>A tissue-specific atlas of mouse protein phosphorylation and expression.</title>
        <authorList>
            <person name="Huttlin E.L."/>
            <person name="Jedrychowski M.P."/>
            <person name="Elias J.E."/>
            <person name="Goswami T."/>
            <person name="Rad R."/>
            <person name="Beausoleil S.A."/>
            <person name="Villen J."/>
            <person name="Haas W."/>
            <person name="Sowa M.E."/>
            <person name="Gygi S.P."/>
        </authorList>
    </citation>
    <scope>IDENTIFICATION BY MASS SPECTROMETRY [LARGE SCALE ANALYSIS]</scope>
    <source>
        <tissue>Testis</tissue>
    </source>
</reference>
<reference key="5">
    <citation type="journal article" date="2023" name="Cell Death Dis.">
        <title>DNALI1 deficiency causes male infertility with severe asthenozoospermia in humans and mice by disrupting the assembly of the flagellar inner dynein arms and fibrous sheath.</title>
        <authorList>
            <person name="Wu H."/>
            <person name="Liu Y."/>
            <person name="Li Y."/>
            <person name="Li K."/>
            <person name="Xu C."/>
            <person name="Gao Y."/>
            <person name="Lv M."/>
            <person name="Guo R."/>
            <person name="Xu Y."/>
            <person name="Zhou P."/>
            <person name="Wei Z."/>
            <person name="Hua R."/>
            <person name="He X."/>
            <person name="Cao Y."/>
        </authorList>
    </citation>
    <scope>DISRUPTION PHENOTYPE</scope>
    <scope>FUNCTION</scope>
</reference>
<proteinExistence type="evidence at protein level"/>
<name>IDLC_MOUSE</name>
<protein>
    <recommendedName>
        <fullName evidence="7">Axonemal dynein light intermediate polypeptide 1</fullName>
    </recommendedName>
    <alternativeName>
        <fullName>Inner dynein arm light chain, axonemal</fullName>
    </alternativeName>
</protein>
<dbReference type="EMBL" id="AK077109">
    <property type="protein sequence ID" value="BAC36617.1"/>
    <property type="molecule type" value="mRNA"/>
</dbReference>
<dbReference type="EMBL" id="BC122552">
    <property type="protein sequence ID" value="AAI22553.1"/>
    <property type="molecule type" value="mRNA"/>
</dbReference>
<dbReference type="EMBL" id="BC118619">
    <property type="protein sequence ID" value="AAI18620.1"/>
    <property type="molecule type" value="mRNA"/>
</dbReference>
<dbReference type="CCDS" id="CCDS18635.1"/>
<dbReference type="RefSeq" id="NP_780432.1">
    <property type="nucleotide sequence ID" value="NM_175223.5"/>
</dbReference>
<dbReference type="SMR" id="Q8BVN8"/>
<dbReference type="FunCoup" id="Q8BVN8">
    <property type="interactions" value="219"/>
</dbReference>
<dbReference type="STRING" id="10090.ENSMUSP00000047783"/>
<dbReference type="iPTMnet" id="Q8BVN8"/>
<dbReference type="PhosphoSitePlus" id="Q8BVN8"/>
<dbReference type="SwissPalm" id="Q8BVN8"/>
<dbReference type="PaxDb" id="10090-ENSMUSP00000047783"/>
<dbReference type="ProteomicsDB" id="273091"/>
<dbReference type="Antibodypedia" id="31735">
    <property type="antibodies" value="203 antibodies from 22 providers"/>
</dbReference>
<dbReference type="DNASU" id="75563"/>
<dbReference type="Ensembl" id="ENSMUST00000036383.4">
    <property type="protein sequence ID" value="ENSMUSP00000047783.4"/>
    <property type="gene ID" value="ENSMUSG00000042707.7"/>
</dbReference>
<dbReference type="GeneID" id="75563"/>
<dbReference type="KEGG" id="mmu:75563"/>
<dbReference type="UCSC" id="uc008urp.1">
    <property type="organism name" value="mouse"/>
</dbReference>
<dbReference type="AGR" id="MGI:1922813"/>
<dbReference type="CTD" id="7802"/>
<dbReference type="MGI" id="MGI:1922813">
    <property type="gene designation" value="Dnali1"/>
</dbReference>
<dbReference type="VEuPathDB" id="HostDB:ENSMUSG00000042707"/>
<dbReference type="eggNOG" id="KOG4001">
    <property type="taxonomic scope" value="Eukaryota"/>
</dbReference>
<dbReference type="GeneTree" id="ENSGT00390000003012"/>
<dbReference type="HOGENOM" id="CLU_072652_0_0_1"/>
<dbReference type="InParanoid" id="Q8BVN8"/>
<dbReference type="OMA" id="QVTIICA"/>
<dbReference type="OrthoDB" id="273640at2759"/>
<dbReference type="PhylomeDB" id="Q8BVN8"/>
<dbReference type="TreeFam" id="TF314891"/>
<dbReference type="BioGRID-ORCS" id="75563">
    <property type="hits" value="3 hits in 77 CRISPR screens"/>
</dbReference>
<dbReference type="PRO" id="PR:Q8BVN8"/>
<dbReference type="Proteomes" id="UP000000589">
    <property type="component" value="Chromosome 4"/>
</dbReference>
<dbReference type="RNAct" id="Q8BVN8">
    <property type="molecule type" value="protein"/>
</dbReference>
<dbReference type="Bgee" id="ENSMUSG00000042707">
    <property type="expression patterns" value="Expressed in seminiferous tubule of testis and 47 other cell types or tissues"/>
</dbReference>
<dbReference type="ExpressionAtlas" id="Q8BVN8">
    <property type="expression patterns" value="baseline and differential"/>
</dbReference>
<dbReference type="GO" id="GO:0097729">
    <property type="term" value="C:9+2 motile cilium"/>
    <property type="evidence" value="ECO:0000269"/>
    <property type="project" value="MGI"/>
</dbReference>
<dbReference type="GO" id="GO:0005930">
    <property type="term" value="C:axoneme"/>
    <property type="evidence" value="ECO:0000314"/>
    <property type="project" value="MGI"/>
</dbReference>
<dbReference type="GO" id="GO:0097546">
    <property type="term" value="C:ciliary base"/>
    <property type="evidence" value="ECO:0000269"/>
    <property type="project" value="MGI"/>
</dbReference>
<dbReference type="GO" id="GO:0005929">
    <property type="term" value="C:cilium"/>
    <property type="evidence" value="ECO:0000314"/>
    <property type="project" value="MGI"/>
</dbReference>
<dbReference type="GO" id="GO:0005737">
    <property type="term" value="C:cytoplasm"/>
    <property type="evidence" value="ECO:0000314"/>
    <property type="project" value="MGI"/>
</dbReference>
<dbReference type="GO" id="GO:0120293">
    <property type="term" value="C:dynein axonemal particle"/>
    <property type="evidence" value="ECO:0000250"/>
    <property type="project" value="UniProtKB"/>
</dbReference>
<dbReference type="GO" id="GO:0030286">
    <property type="term" value="C:dynein complex"/>
    <property type="evidence" value="ECO:0007669"/>
    <property type="project" value="UniProtKB-KW"/>
</dbReference>
<dbReference type="GO" id="GO:0030175">
    <property type="term" value="C:filopodium"/>
    <property type="evidence" value="ECO:0000314"/>
    <property type="project" value="MGI"/>
</dbReference>
<dbReference type="GO" id="GO:0097386">
    <property type="term" value="C:glial cell projection"/>
    <property type="evidence" value="ECO:0000269"/>
    <property type="project" value="MGI"/>
</dbReference>
<dbReference type="GO" id="GO:0045171">
    <property type="term" value="C:intercellular bridge"/>
    <property type="evidence" value="ECO:0007669"/>
    <property type="project" value="Ensembl"/>
</dbReference>
<dbReference type="GO" id="GO:0072686">
    <property type="term" value="C:mitotic spindle"/>
    <property type="evidence" value="ECO:0007669"/>
    <property type="project" value="Ensembl"/>
</dbReference>
<dbReference type="GO" id="GO:0031514">
    <property type="term" value="C:motile cilium"/>
    <property type="evidence" value="ECO:0000314"/>
    <property type="project" value="UniProtKB"/>
</dbReference>
<dbReference type="GO" id="GO:0005654">
    <property type="term" value="C:nucleoplasm"/>
    <property type="evidence" value="ECO:0007669"/>
    <property type="project" value="Ensembl"/>
</dbReference>
<dbReference type="GO" id="GO:0036126">
    <property type="term" value="C:sperm flagellum"/>
    <property type="evidence" value="ECO:0000314"/>
    <property type="project" value="UniProtKB"/>
</dbReference>
<dbReference type="GO" id="GO:0045504">
    <property type="term" value="F:dynein heavy chain binding"/>
    <property type="evidence" value="ECO:0000353"/>
    <property type="project" value="MGI"/>
</dbReference>
<dbReference type="GO" id="GO:0003341">
    <property type="term" value="P:cilium movement"/>
    <property type="evidence" value="ECO:0000305"/>
    <property type="project" value="MGI"/>
</dbReference>
<dbReference type="GO" id="GO:0120316">
    <property type="term" value="P:sperm flagellum assembly"/>
    <property type="evidence" value="ECO:0000315"/>
    <property type="project" value="UniProtKB"/>
</dbReference>
<dbReference type="InterPro" id="IPR019347">
    <property type="entry name" value="Axonemal_dynein_light_chain"/>
</dbReference>
<dbReference type="PANTHER" id="PTHR13183:SF0">
    <property type="entry name" value="AXONEMAL DYNEIN LIGHT INTERMEDIATE POLYPEPTIDE 1"/>
    <property type="match status" value="1"/>
</dbReference>
<dbReference type="PANTHER" id="PTHR13183">
    <property type="entry name" value="AXONEMAL INNER ARM DYNEIN LIGHT CHAIN 28"/>
    <property type="match status" value="1"/>
</dbReference>
<dbReference type="Pfam" id="PF10211">
    <property type="entry name" value="Ax_dynein_light"/>
    <property type="match status" value="1"/>
</dbReference>
<accession>Q8BVN8</accession>
<accession>Q0IIN3</accession>
<accession>Q147V3</accession>
<organism>
    <name type="scientific">Mus musculus</name>
    <name type="common">Mouse</name>
    <dbReference type="NCBI Taxonomy" id="10090"/>
    <lineage>
        <taxon>Eukaryota</taxon>
        <taxon>Metazoa</taxon>
        <taxon>Chordata</taxon>
        <taxon>Craniata</taxon>
        <taxon>Vertebrata</taxon>
        <taxon>Euteleostomi</taxon>
        <taxon>Mammalia</taxon>
        <taxon>Eutheria</taxon>
        <taxon>Euarchontoglires</taxon>
        <taxon>Glires</taxon>
        <taxon>Rodentia</taxon>
        <taxon>Myomorpha</taxon>
        <taxon>Muroidea</taxon>
        <taxon>Muridae</taxon>
        <taxon>Murinae</taxon>
        <taxon>Mus</taxon>
        <taxon>Mus</taxon>
    </lineage>
</organism>